<dbReference type="EMBL" id="CP001601">
    <property type="protein sequence ID" value="ACP32976.1"/>
    <property type="molecule type" value="Genomic_DNA"/>
</dbReference>
<dbReference type="RefSeq" id="WP_010190126.1">
    <property type="nucleotide sequence ID" value="NC_012590.1"/>
</dbReference>
<dbReference type="SMR" id="C3PGM2"/>
<dbReference type="STRING" id="548476.cauri_1383"/>
<dbReference type="GeneID" id="31924010"/>
<dbReference type="KEGG" id="car:cauri_1383"/>
<dbReference type="eggNOG" id="COG0231">
    <property type="taxonomic scope" value="Bacteria"/>
</dbReference>
<dbReference type="HOGENOM" id="CLU_074944_0_1_11"/>
<dbReference type="OrthoDB" id="9801844at2"/>
<dbReference type="UniPathway" id="UPA00345"/>
<dbReference type="Proteomes" id="UP000002077">
    <property type="component" value="Chromosome"/>
</dbReference>
<dbReference type="GO" id="GO:0005737">
    <property type="term" value="C:cytoplasm"/>
    <property type="evidence" value="ECO:0007669"/>
    <property type="project" value="UniProtKB-SubCell"/>
</dbReference>
<dbReference type="GO" id="GO:0003746">
    <property type="term" value="F:translation elongation factor activity"/>
    <property type="evidence" value="ECO:0007669"/>
    <property type="project" value="UniProtKB-UniRule"/>
</dbReference>
<dbReference type="GO" id="GO:0043043">
    <property type="term" value="P:peptide biosynthetic process"/>
    <property type="evidence" value="ECO:0007669"/>
    <property type="project" value="InterPro"/>
</dbReference>
<dbReference type="CDD" id="cd04470">
    <property type="entry name" value="S1_EF-P_repeat_1"/>
    <property type="match status" value="1"/>
</dbReference>
<dbReference type="CDD" id="cd05794">
    <property type="entry name" value="S1_EF-P_repeat_2"/>
    <property type="match status" value="1"/>
</dbReference>
<dbReference type="FunFam" id="2.30.30.30:FF:000003">
    <property type="entry name" value="Elongation factor P"/>
    <property type="match status" value="1"/>
</dbReference>
<dbReference type="FunFam" id="2.40.50.140:FF:000004">
    <property type="entry name" value="Elongation factor P"/>
    <property type="match status" value="1"/>
</dbReference>
<dbReference type="FunFam" id="2.40.50.140:FF:000009">
    <property type="entry name" value="Elongation factor P"/>
    <property type="match status" value="1"/>
</dbReference>
<dbReference type="Gene3D" id="2.30.30.30">
    <property type="match status" value="1"/>
</dbReference>
<dbReference type="Gene3D" id="2.40.50.140">
    <property type="entry name" value="Nucleic acid-binding proteins"/>
    <property type="match status" value="2"/>
</dbReference>
<dbReference type="HAMAP" id="MF_00141">
    <property type="entry name" value="EF_P"/>
    <property type="match status" value="1"/>
</dbReference>
<dbReference type="InterPro" id="IPR015365">
    <property type="entry name" value="Elong-fact-P_C"/>
</dbReference>
<dbReference type="InterPro" id="IPR012340">
    <property type="entry name" value="NA-bd_OB-fold"/>
</dbReference>
<dbReference type="InterPro" id="IPR014722">
    <property type="entry name" value="Rib_uL2_dom2"/>
</dbReference>
<dbReference type="InterPro" id="IPR020599">
    <property type="entry name" value="Transl_elong_fac_P/YeiP"/>
</dbReference>
<dbReference type="InterPro" id="IPR013185">
    <property type="entry name" value="Transl_elong_KOW-like"/>
</dbReference>
<dbReference type="InterPro" id="IPR001059">
    <property type="entry name" value="Transl_elong_P/YeiP_cen"/>
</dbReference>
<dbReference type="InterPro" id="IPR013852">
    <property type="entry name" value="Transl_elong_P/YeiP_CS"/>
</dbReference>
<dbReference type="InterPro" id="IPR011768">
    <property type="entry name" value="Transl_elongation_fac_P"/>
</dbReference>
<dbReference type="InterPro" id="IPR008991">
    <property type="entry name" value="Translation_prot_SH3-like_sf"/>
</dbReference>
<dbReference type="NCBIfam" id="TIGR00038">
    <property type="entry name" value="efp"/>
    <property type="match status" value="1"/>
</dbReference>
<dbReference type="NCBIfam" id="NF001810">
    <property type="entry name" value="PRK00529.1"/>
    <property type="match status" value="1"/>
</dbReference>
<dbReference type="PANTHER" id="PTHR30053">
    <property type="entry name" value="ELONGATION FACTOR P"/>
    <property type="match status" value="1"/>
</dbReference>
<dbReference type="PANTHER" id="PTHR30053:SF12">
    <property type="entry name" value="ELONGATION FACTOR P (EF-P) FAMILY PROTEIN"/>
    <property type="match status" value="1"/>
</dbReference>
<dbReference type="Pfam" id="PF01132">
    <property type="entry name" value="EFP"/>
    <property type="match status" value="1"/>
</dbReference>
<dbReference type="Pfam" id="PF08207">
    <property type="entry name" value="EFP_N"/>
    <property type="match status" value="1"/>
</dbReference>
<dbReference type="Pfam" id="PF09285">
    <property type="entry name" value="Elong-fact-P_C"/>
    <property type="match status" value="1"/>
</dbReference>
<dbReference type="PIRSF" id="PIRSF005901">
    <property type="entry name" value="EF-P"/>
    <property type="match status" value="1"/>
</dbReference>
<dbReference type="SMART" id="SM01185">
    <property type="entry name" value="EFP"/>
    <property type="match status" value="1"/>
</dbReference>
<dbReference type="SMART" id="SM00841">
    <property type="entry name" value="Elong-fact-P_C"/>
    <property type="match status" value="1"/>
</dbReference>
<dbReference type="SUPFAM" id="SSF50249">
    <property type="entry name" value="Nucleic acid-binding proteins"/>
    <property type="match status" value="2"/>
</dbReference>
<dbReference type="SUPFAM" id="SSF50104">
    <property type="entry name" value="Translation proteins SH3-like domain"/>
    <property type="match status" value="1"/>
</dbReference>
<dbReference type="PROSITE" id="PS01275">
    <property type="entry name" value="EFP"/>
    <property type="match status" value="1"/>
</dbReference>
<feature type="chain" id="PRO_1000123003" description="Elongation factor P">
    <location>
        <begin position="1"/>
        <end position="187"/>
    </location>
</feature>
<organism>
    <name type="scientific">Corynebacterium aurimucosum (strain ATCC 700975 / DSM 44827 / CIP 107346 / CN-1)</name>
    <name type="common">Corynebacterium nigricans</name>
    <dbReference type="NCBI Taxonomy" id="548476"/>
    <lineage>
        <taxon>Bacteria</taxon>
        <taxon>Bacillati</taxon>
        <taxon>Actinomycetota</taxon>
        <taxon>Actinomycetes</taxon>
        <taxon>Mycobacteriales</taxon>
        <taxon>Corynebacteriaceae</taxon>
        <taxon>Corynebacterium</taxon>
    </lineage>
</organism>
<comment type="function">
    <text evidence="1">Involved in peptide bond synthesis. Stimulates efficient translation and peptide-bond synthesis on native or reconstituted 70S ribosomes in vitro. Probably functions indirectly by altering the affinity of the ribosome for aminoacyl-tRNA, thus increasing their reactivity as acceptors for peptidyl transferase.</text>
</comment>
<comment type="pathway">
    <text evidence="1">Protein biosynthesis; polypeptide chain elongation.</text>
</comment>
<comment type="subcellular location">
    <subcellularLocation>
        <location evidence="1">Cytoplasm</location>
    </subcellularLocation>
</comment>
<comment type="similarity">
    <text evidence="1">Belongs to the elongation factor P family.</text>
</comment>
<accession>C3PGM2</accession>
<evidence type="ECO:0000255" key="1">
    <source>
        <dbReference type="HAMAP-Rule" id="MF_00141"/>
    </source>
</evidence>
<reference key="1">
    <citation type="journal article" date="2010" name="BMC Genomics">
        <title>Complete genome sequence and lifestyle of black-pigmented Corynebacterium aurimucosum ATCC 700975 (formerly C. nigricans CN-1) isolated from a vaginal swab of a woman with spontaneous abortion.</title>
        <authorList>
            <person name="Trost E."/>
            <person name="Gotker S."/>
            <person name="Schneider J."/>
            <person name="Schneiker-Bekel S."/>
            <person name="Szczepanowski R."/>
            <person name="Tilker A."/>
            <person name="Viehoever P."/>
            <person name="Arnold W."/>
            <person name="Bekel T."/>
            <person name="Blom J."/>
            <person name="Gartemann K.H."/>
            <person name="Linke B."/>
            <person name="Goesmann A."/>
            <person name="Puhler A."/>
            <person name="Shukla S.K."/>
            <person name="Tauch A."/>
        </authorList>
    </citation>
    <scope>NUCLEOTIDE SEQUENCE [LARGE SCALE GENOMIC DNA]</scope>
    <source>
        <strain>ATCC 700975 / DSM 44827 / CIP 107346 / CN-1</strain>
    </source>
</reference>
<keyword id="KW-0963">Cytoplasm</keyword>
<keyword id="KW-0251">Elongation factor</keyword>
<keyword id="KW-0648">Protein biosynthesis</keyword>
<keyword id="KW-1185">Reference proteome</keyword>
<proteinExistence type="inferred from homology"/>
<sequence length="187" mass="20895">MADTTDFKNGLVLKIDNKLQQIVEFQHVKPGKGPAFVRTKLKDVVSGKVTDKTFNAGVKVETANVDRRDMTYLYNDGQNYVVMDDKTYEQYELPFDKFGDAGKFLLENMRVQVSFHDGEALFGELPISVDLKVEHTEPGLQGDRSNGGTKPATLETGAEIQVPLFIETGNTLKIDTRTGEYLSRVNN</sequence>
<gene>
    <name evidence="1" type="primary">efp</name>
    <name type="ordered locus">cauri_1383</name>
</gene>
<name>EFP_CORA7</name>
<protein>
    <recommendedName>
        <fullName evidence="1">Elongation factor P</fullName>
        <shortName evidence="1">EF-P</shortName>
    </recommendedName>
</protein>